<organism>
    <name type="scientific">Prochlorococcus marinus subsp. pastoris (strain CCMP1986 / NIES-2087 / MED4)</name>
    <dbReference type="NCBI Taxonomy" id="59919"/>
    <lineage>
        <taxon>Bacteria</taxon>
        <taxon>Bacillati</taxon>
        <taxon>Cyanobacteriota</taxon>
        <taxon>Cyanophyceae</taxon>
        <taxon>Synechococcales</taxon>
        <taxon>Prochlorococcaceae</taxon>
        <taxon>Prochlorococcus</taxon>
    </lineage>
</organism>
<feature type="chain" id="PRO_0000359028" description="Acetyl-coenzyme A carboxylase carboxyl transferase subunit beta">
    <location>
        <begin position="1"/>
        <end position="292"/>
    </location>
</feature>
<feature type="domain" description="CoA carboxyltransferase N-terminal" evidence="2">
    <location>
        <begin position="29"/>
        <end position="292"/>
    </location>
</feature>
<feature type="zinc finger region" description="C4-type" evidence="1">
    <location>
        <begin position="33"/>
        <end position="55"/>
    </location>
</feature>
<feature type="binding site" evidence="1">
    <location>
        <position position="33"/>
    </location>
    <ligand>
        <name>Zn(2+)</name>
        <dbReference type="ChEBI" id="CHEBI:29105"/>
    </ligand>
</feature>
<feature type="binding site" evidence="1">
    <location>
        <position position="36"/>
    </location>
    <ligand>
        <name>Zn(2+)</name>
        <dbReference type="ChEBI" id="CHEBI:29105"/>
    </ligand>
</feature>
<feature type="binding site" evidence="1">
    <location>
        <position position="52"/>
    </location>
    <ligand>
        <name>Zn(2+)</name>
        <dbReference type="ChEBI" id="CHEBI:29105"/>
    </ligand>
</feature>
<feature type="binding site" evidence="1">
    <location>
        <position position="55"/>
    </location>
    <ligand>
        <name>Zn(2+)</name>
        <dbReference type="ChEBI" id="CHEBI:29105"/>
    </ligand>
</feature>
<comment type="function">
    <text evidence="1">Component of the acetyl coenzyme A carboxylase (ACC) complex. Biotin carboxylase (BC) catalyzes the carboxylation of biotin on its carrier protein (BCCP) and then the CO(2) group is transferred by the transcarboxylase to acetyl-CoA to form malonyl-CoA.</text>
</comment>
<comment type="catalytic activity">
    <reaction evidence="1">
        <text>N(6)-carboxybiotinyl-L-lysyl-[protein] + acetyl-CoA = N(6)-biotinyl-L-lysyl-[protein] + malonyl-CoA</text>
        <dbReference type="Rhea" id="RHEA:54728"/>
        <dbReference type="Rhea" id="RHEA-COMP:10505"/>
        <dbReference type="Rhea" id="RHEA-COMP:10506"/>
        <dbReference type="ChEBI" id="CHEBI:57288"/>
        <dbReference type="ChEBI" id="CHEBI:57384"/>
        <dbReference type="ChEBI" id="CHEBI:83144"/>
        <dbReference type="ChEBI" id="CHEBI:83145"/>
        <dbReference type="EC" id="2.1.3.15"/>
    </reaction>
</comment>
<comment type="cofactor">
    <cofactor evidence="1">
        <name>Zn(2+)</name>
        <dbReference type="ChEBI" id="CHEBI:29105"/>
    </cofactor>
    <text evidence="1">Binds 1 zinc ion per subunit.</text>
</comment>
<comment type="pathway">
    <text evidence="1">Lipid metabolism; malonyl-CoA biosynthesis; malonyl-CoA from acetyl-CoA: step 1/1.</text>
</comment>
<comment type="subunit">
    <text evidence="1">Acetyl-CoA carboxylase is a heterohexamer composed of biotin carboxyl carrier protein (AccB), biotin carboxylase (AccC) and two subunits each of ACCase subunit alpha (AccA) and ACCase subunit beta (AccD).</text>
</comment>
<comment type="subcellular location">
    <subcellularLocation>
        <location evidence="1">Cytoplasm</location>
    </subcellularLocation>
</comment>
<comment type="similarity">
    <text evidence="1">Belongs to the AccD/PCCB family.</text>
</comment>
<sequence>MSLIDWFAARRKDQFVGKVSQDPEESDGLWVKCSECGQVAYRKDLISNFNVCSNCGHHNRINSDERINIIADKDSFKEFDESLSPTDPLKFKDRRSYSERIKESQQGTGLKDGVITGLCSVNSMPLALAVMDFRFMGGSMGSVVGEKITRIVETATIKNYPILIVCASGGARMQEGMLSLMQMAKISGALKKHRAKNLLYMPLLTHPTTGGVTASFAMLGDLILAEPKALIGFAGRRVIEQTLREKLPDNFQTAEYLLEHGFVDVIVNRKELKSTLTKLLKIHGVKELVQTN</sequence>
<dbReference type="EC" id="2.1.3.15" evidence="1"/>
<dbReference type="EMBL" id="BX548174">
    <property type="protein sequence ID" value="CAE19243.1"/>
    <property type="molecule type" value="Genomic_DNA"/>
</dbReference>
<dbReference type="RefSeq" id="WP_011132418.1">
    <property type="nucleotide sequence ID" value="NC_005072.1"/>
</dbReference>
<dbReference type="SMR" id="Q7V1S1"/>
<dbReference type="STRING" id="59919.PMM0784"/>
<dbReference type="KEGG" id="pmm:PMM0784"/>
<dbReference type="eggNOG" id="COG0777">
    <property type="taxonomic scope" value="Bacteria"/>
</dbReference>
<dbReference type="HOGENOM" id="CLU_015486_1_1_3"/>
<dbReference type="OrthoDB" id="9772975at2"/>
<dbReference type="UniPathway" id="UPA00655">
    <property type="reaction ID" value="UER00711"/>
</dbReference>
<dbReference type="Proteomes" id="UP000001026">
    <property type="component" value="Chromosome"/>
</dbReference>
<dbReference type="GO" id="GO:0009317">
    <property type="term" value="C:acetyl-CoA carboxylase complex"/>
    <property type="evidence" value="ECO:0007669"/>
    <property type="project" value="InterPro"/>
</dbReference>
<dbReference type="GO" id="GO:0003989">
    <property type="term" value="F:acetyl-CoA carboxylase activity"/>
    <property type="evidence" value="ECO:0007669"/>
    <property type="project" value="InterPro"/>
</dbReference>
<dbReference type="GO" id="GO:0005524">
    <property type="term" value="F:ATP binding"/>
    <property type="evidence" value="ECO:0007669"/>
    <property type="project" value="UniProtKB-KW"/>
</dbReference>
<dbReference type="GO" id="GO:0016743">
    <property type="term" value="F:carboxyl- or carbamoyltransferase activity"/>
    <property type="evidence" value="ECO:0007669"/>
    <property type="project" value="UniProtKB-UniRule"/>
</dbReference>
<dbReference type="GO" id="GO:0008270">
    <property type="term" value="F:zinc ion binding"/>
    <property type="evidence" value="ECO:0007669"/>
    <property type="project" value="UniProtKB-UniRule"/>
</dbReference>
<dbReference type="GO" id="GO:0006633">
    <property type="term" value="P:fatty acid biosynthetic process"/>
    <property type="evidence" value="ECO:0007669"/>
    <property type="project" value="UniProtKB-KW"/>
</dbReference>
<dbReference type="GO" id="GO:2001295">
    <property type="term" value="P:malonyl-CoA biosynthetic process"/>
    <property type="evidence" value="ECO:0007669"/>
    <property type="project" value="UniProtKB-UniRule"/>
</dbReference>
<dbReference type="Gene3D" id="3.90.226.10">
    <property type="entry name" value="2-enoyl-CoA Hydratase, Chain A, domain 1"/>
    <property type="match status" value="1"/>
</dbReference>
<dbReference type="HAMAP" id="MF_01395">
    <property type="entry name" value="AcetylCoA_CT_beta"/>
    <property type="match status" value="1"/>
</dbReference>
<dbReference type="InterPro" id="IPR034733">
    <property type="entry name" value="AcCoA_carboxyl_beta"/>
</dbReference>
<dbReference type="InterPro" id="IPR000438">
    <property type="entry name" value="Acetyl_CoA_COase_Trfase_b_su"/>
</dbReference>
<dbReference type="InterPro" id="IPR029045">
    <property type="entry name" value="ClpP/crotonase-like_dom_sf"/>
</dbReference>
<dbReference type="InterPro" id="IPR011762">
    <property type="entry name" value="COA_CT_N"/>
</dbReference>
<dbReference type="InterPro" id="IPR041010">
    <property type="entry name" value="Znf-ACC"/>
</dbReference>
<dbReference type="NCBIfam" id="TIGR00515">
    <property type="entry name" value="accD"/>
    <property type="match status" value="1"/>
</dbReference>
<dbReference type="PANTHER" id="PTHR42995">
    <property type="entry name" value="ACETYL-COENZYME A CARBOXYLASE CARBOXYL TRANSFERASE SUBUNIT BETA, CHLOROPLASTIC"/>
    <property type="match status" value="1"/>
</dbReference>
<dbReference type="PANTHER" id="PTHR42995:SF5">
    <property type="entry name" value="ACETYL-COENZYME A CARBOXYLASE CARBOXYL TRANSFERASE SUBUNIT BETA, CHLOROPLASTIC"/>
    <property type="match status" value="1"/>
</dbReference>
<dbReference type="Pfam" id="PF01039">
    <property type="entry name" value="Carboxyl_trans"/>
    <property type="match status" value="1"/>
</dbReference>
<dbReference type="Pfam" id="PF17848">
    <property type="entry name" value="Zn_ribbon_ACC"/>
    <property type="match status" value="1"/>
</dbReference>
<dbReference type="PRINTS" id="PR01070">
    <property type="entry name" value="ACCCTRFRASEB"/>
</dbReference>
<dbReference type="SUPFAM" id="SSF52096">
    <property type="entry name" value="ClpP/crotonase"/>
    <property type="match status" value="1"/>
</dbReference>
<dbReference type="PROSITE" id="PS50980">
    <property type="entry name" value="COA_CT_NTER"/>
    <property type="match status" value="1"/>
</dbReference>
<gene>
    <name evidence="1" type="primary">accD</name>
    <name type="ordered locus">PMM0784</name>
</gene>
<evidence type="ECO:0000255" key="1">
    <source>
        <dbReference type="HAMAP-Rule" id="MF_01395"/>
    </source>
</evidence>
<evidence type="ECO:0000255" key="2">
    <source>
        <dbReference type="PROSITE-ProRule" id="PRU01136"/>
    </source>
</evidence>
<accession>Q7V1S1</accession>
<proteinExistence type="inferred from homology"/>
<name>ACCD_PROMP</name>
<protein>
    <recommendedName>
        <fullName evidence="1">Acetyl-coenzyme A carboxylase carboxyl transferase subunit beta</fullName>
        <shortName evidence="1">ACCase subunit beta</shortName>
        <shortName evidence="1">Acetyl-CoA carboxylase carboxyltransferase subunit beta</shortName>
        <ecNumber evidence="1">2.1.3.15</ecNumber>
    </recommendedName>
</protein>
<keyword id="KW-0067">ATP-binding</keyword>
<keyword id="KW-0963">Cytoplasm</keyword>
<keyword id="KW-0275">Fatty acid biosynthesis</keyword>
<keyword id="KW-0276">Fatty acid metabolism</keyword>
<keyword id="KW-0444">Lipid biosynthesis</keyword>
<keyword id="KW-0443">Lipid metabolism</keyword>
<keyword id="KW-0479">Metal-binding</keyword>
<keyword id="KW-0547">Nucleotide-binding</keyword>
<keyword id="KW-0808">Transferase</keyword>
<keyword id="KW-0862">Zinc</keyword>
<keyword id="KW-0863">Zinc-finger</keyword>
<reference key="1">
    <citation type="journal article" date="2003" name="Nature">
        <title>Genome divergence in two Prochlorococcus ecotypes reflects oceanic niche differentiation.</title>
        <authorList>
            <person name="Rocap G."/>
            <person name="Larimer F.W."/>
            <person name="Lamerdin J.E."/>
            <person name="Malfatti S."/>
            <person name="Chain P."/>
            <person name="Ahlgren N.A."/>
            <person name="Arellano A."/>
            <person name="Coleman M."/>
            <person name="Hauser L."/>
            <person name="Hess W.R."/>
            <person name="Johnson Z.I."/>
            <person name="Land M.L."/>
            <person name="Lindell D."/>
            <person name="Post A.F."/>
            <person name="Regala W."/>
            <person name="Shah M."/>
            <person name="Shaw S.L."/>
            <person name="Steglich C."/>
            <person name="Sullivan M.B."/>
            <person name="Ting C.S."/>
            <person name="Tolonen A."/>
            <person name="Webb E.A."/>
            <person name="Zinser E.R."/>
            <person name="Chisholm S.W."/>
        </authorList>
    </citation>
    <scope>NUCLEOTIDE SEQUENCE [LARGE SCALE GENOMIC DNA]</scope>
    <source>
        <strain>CCMP1986 / NIES-2087 / MED4</strain>
    </source>
</reference>